<comment type="function">
    <text evidence="1">Facilitates the functional incorporation of the urease nickel metallocenter. This process requires GTP hydrolysis, probably effectuated by UreG.</text>
</comment>
<comment type="subunit">
    <text evidence="1">Homodimer. UreD, UreF and UreG form a complex that acts as a GTP-hydrolysis-dependent molecular chaperone, activating the urease apoprotein by helping to assemble the nickel containing metallocenter of UreC. The UreE protein probably delivers the nickel.</text>
</comment>
<comment type="subcellular location">
    <subcellularLocation>
        <location evidence="1">Cytoplasm</location>
    </subcellularLocation>
</comment>
<comment type="similarity">
    <text evidence="1">Belongs to the SIMIBI class G3E GTPase family. UreG subfamily.</text>
</comment>
<reference key="1">
    <citation type="submission" date="2007-11" db="EMBL/GenBank/DDBJ databases">
        <title>Complete genome sequence of Clostridium phytofermentans ISDg.</title>
        <authorList>
            <person name="Leschine S.B."/>
            <person name="Warnick T.A."/>
            <person name="Blanchard J.L."/>
            <person name="Schnell D.J."/>
            <person name="Petit E.L."/>
            <person name="LaTouf W.G."/>
            <person name="Copeland A."/>
            <person name="Lucas S."/>
            <person name="Lapidus A."/>
            <person name="Barry K."/>
            <person name="Glavina del Rio T."/>
            <person name="Dalin E."/>
            <person name="Tice H."/>
            <person name="Pitluck S."/>
            <person name="Kiss H."/>
            <person name="Brettin T."/>
            <person name="Bruce D."/>
            <person name="Detter J.C."/>
            <person name="Han C."/>
            <person name="Kuske C."/>
            <person name="Schmutz J."/>
            <person name="Larimer F."/>
            <person name="Land M."/>
            <person name="Hauser L."/>
            <person name="Kyrpides N."/>
            <person name="Kim E.A."/>
            <person name="Richardson P."/>
        </authorList>
    </citation>
    <scope>NUCLEOTIDE SEQUENCE [LARGE SCALE GENOMIC DNA]</scope>
    <source>
        <strain>ATCC 700394 / DSM 18823 / ISDg</strain>
    </source>
</reference>
<accession>A9KJR6</accession>
<gene>
    <name evidence="1" type="primary">ureG</name>
    <name type="ordered locus">Cphy_0684</name>
</gene>
<name>UREG_LACP7</name>
<sequence length="203" mass="22175">MKPIKIGVGGPVGAGKTMLVEKLTRYMSDDYSMAVVTNDIYTKEDAKFLMENGVLPSDRIIGVETGGCPHTAIREDASMNFAAVNELVQRHPDVQIVFVESGGDNLAATFSPELADFSIYIIDVAQGEKIPRKGGQGMIKSDLFVINKTDLAPYVGANLDIMASDTRKFRGNKPFVFTNLKKDEGLPDVISWIRKNVCLEGLT</sequence>
<dbReference type="EMBL" id="CP000885">
    <property type="protein sequence ID" value="ABX41071.1"/>
    <property type="molecule type" value="Genomic_DNA"/>
</dbReference>
<dbReference type="RefSeq" id="WP_012198714.1">
    <property type="nucleotide sequence ID" value="NC_010001.1"/>
</dbReference>
<dbReference type="SMR" id="A9KJR6"/>
<dbReference type="STRING" id="357809.Cphy_0684"/>
<dbReference type="KEGG" id="cpy:Cphy_0684"/>
<dbReference type="eggNOG" id="COG0378">
    <property type="taxonomic scope" value="Bacteria"/>
</dbReference>
<dbReference type="HOGENOM" id="CLU_072144_1_0_9"/>
<dbReference type="OrthoDB" id="9802035at2"/>
<dbReference type="Proteomes" id="UP000000370">
    <property type="component" value="Chromosome"/>
</dbReference>
<dbReference type="GO" id="GO:0005737">
    <property type="term" value="C:cytoplasm"/>
    <property type="evidence" value="ECO:0007669"/>
    <property type="project" value="UniProtKB-SubCell"/>
</dbReference>
<dbReference type="GO" id="GO:0005525">
    <property type="term" value="F:GTP binding"/>
    <property type="evidence" value="ECO:0007669"/>
    <property type="project" value="UniProtKB-KW"/>
</dbReference>
<dbReference type="GO" id="GO:0003924">
    <property type="term" value="F:GTPase activity"/>
    <property type="evidence" value="ECO:0007669"/>
    <property type="project" value="InterPro"/>
</dbReference>
<dbReference type="GO" id="GO:0016151">
    <property type="term" value="F:nickel cation binding"/>
    <property type="evidence" value="ECO:0007669"/>
    <property type="project" value="UniProtKB-UniRule"/>
</dbReference>
<dbReference type="GO" id="GO:0043419">
    <property type="term" value="P:urea catabolic process"/>
    <property type="evidence" value="ECO:0007669"/>
    <property type="project" value="InterPro"/>
</dbReference>
<dbReference type="CDD" id="cd05540">
    <property type="entry name" value="UreG"/>
    <property type="match status" value="1"/>
</dbReference>
<dbReference type="FunFam" id="3.40.50.300:FF:000208">
    <property type="entry name" value="Urease accessory protein UreG"/>
    <property type="match status" value="1"/>
</dbReference>
<dbReference type="Gene3D" id="3.40.50.300">
    <property type="entry name" value="P-loop containing nucleotide triphosphate hydrolases"/>
    <property type="match status" value="1"/>
</dbReference>
<dbReference type="HAMAP" id="MF_01389">
    <property type="entry name" value="UreG"/>
    <property type="match status" value="1"/>
</dbReference>
<dbReference type="InterPro" id="IPR003495">
    <property type="entry name" value="CobW/HypB/UreG_nucleotide-bd"/>
</dbReference>
<dbReference type="InterPro" id="IPR027417">
    <property type="entry name" value="P-loop_NTPase"/>
</dbReference>
<dbReference type="InterPro" id="IPR004400">
    <property type="entry name" value="UreG"/>
</dbReference>
<dbReference type="NCBIfam" id="TIGR00101">
    <property type="entry name" value="ureG"/>
    <property type="match status" value="1"/>
</dbReference>
<dbReference type="PANTHER" id="PTHR31715">
    <property type="entry name" value="UREASE ACCESSORY PROTEIN G"/>
    <property type="match status" value="1"/>
</dbReference>
<dbReference type="PANTHER" id="PTHR31715:SF0">
    <property type="entry name" value="UREASE ACCESSORY PROTEIN G"/>
    <property type="match status" value="1"/>
</dbReference>
<dbReference type="Pfam" id="PF02492">
    <property type="entry name" value="cobW"/>
    <property type="match status" value="1"/>
</dbReference>
<dbReference type="PIRSF" id="PIRSF005624">
    <property type="entry name" value="Ni-bind_GTPase"/>
    <property type="match status" value="1"/>
</dbReference>
<dbReference type="SUPFAM" id="SSF52540">
    <property type="entry name" value="P-loop containing nucleoside triphosphate hydrolases"/>
    <property type="match status" value="1"/>
</dbReference>
<proteinExistence type="inferred from homology"/>
<evidence type="ECO:0000255" key="1">
    <source>
        <dbReference type="HAMAP-Rule" id="MF_01389"/>
    </source>
</evidence>
<feature type="chain" id="PRO_1000145170" description="Urease accessory protein UreG">
    <location>
        <begin position="1"/>
        <end position="203"/>
    </location>
</feature>
<feature type="binding site" evidence="1">
    <location>
        <begin position="10"/>
        <end position="17"/>
    </location>
    <ligand>
        <name>GTP</name>
        <dbReference type="ChEBI" id="CHEBI:37565"/>
    </ligand>
</feature>
<protein>
    <recommendedName>
        <fullName evidence="1">Urease accessory protein UreG</fullName>
    </recommendedName>
</protein>
<organism>
    <name type="scientific">Lachnoclostridium phytofermentans (strain ATCC 700394 / DSM 18823 / ISDg)</name>
    <name type="common">Clostridium phytofermentans</name>
    <dbReference type="NCBI Taxonomy" id="357809"/>
    <lineage>
        <taxon>Bacteria</taxon>
        <taxon>Bacillati</taxon>
        <taxon>Bacillota</taxon>
        <taxon>Clostridia</taxon>
        <taxon>Lachnospirales</taxon>
        <taxon>Lachnospiraceae</taxon>
    </lineage>
</organism>
<keyword id="KW-0143">Chaperone</keyword>
<keyword id="KW-0963">Cytoplasm</keyword>
<keyword id="KW-0342">GTP-binding</keyword>
<keyword id="KW-0996">Nickel insertion</keyword>
<keyword id="KW-0547">Nucleotide-binding</keyword>
<keyword id="KW-1185">Reference proteome</keyword>